<comment type="function">
    <text evidence="1">Removes 5-oxoproline from various penultimate amino acid residues except L-proline.</text>
</comment>
<comment type="catalytic activity">
    <reaction evidence="1">
        <text>Release of an N-terminal pyroglutamyl group from a polypeptide, the second amino acid generally not being Pro.</text>
        <dbReference type="EC" id="3.4.19.3"/>
    </reaction>
</comment>
<comment type="subunit">
    <text evidence="1">Homotetramer.</text>
</comment>
<comment type="subcellular location">
    <subcellularLocation>
        <location evidence="1">Cytoplasm</location>
    </subcellularLocation>
</comment>
<comment type="similarity">
    <text evidence="1">Belongs to the peptidase C15 family.</text>
</comment>
<evidence type="ECO:0000255" key="1">
    <source>
        <dbReference type="HAMAP-Rule" id="MF_00417"/>
    </source>
</evidence>
<accession>Q2FUS6</accession>
<dbReference type="EC" id="3.4.19.3" evidence="1"/>
<dbReference type="EMBL" id="CP000253">
    <property type="protein sequence ID" value="ABD32011.1"/>
    <property type="molecule type" value="Genomic_DNA"/>
</dbReference>
<dbReference type="RefSeq" id="WP_000547833.1">
    <property type="nucleotide sequence ID" value="NZ_LS483365.1"/>
</dbReference>
<dbReference type="RefSeq" id="YP_501474.1">
    <property type="nucleotide sequence ID" value="NC_007795.1"/>
</dbReference>
<dbReference type="SMR" id="Q2FUS6"/>
<dbReference type="STRING" id="93061.SAOUHSC_03025"/>
<dbReference type="MEROPS" id="C15.001"/>
<dbReference type="PaxDb" id="1280-SAXN108_2964"/>
<dbReference type="GeneID" id="3921292"/>
<dbReference type="KEGG" id="sao:SAOUHSC_03025"/>
<dbReference type="PATRIC" id="fig|93061.5.peg.2733"/>
<dbReference type="eggNOG" id="COG2039">
    <property type="taxonomic scope" value="Bacteria"/>
</dbReference>
<dbReference type="HOGENOM" id="CLU_043960_4_0_9"/>
<dbReference type="OrthoDB" id="9779738at2"/>
<dbReference type="PRO" id="PR:Q2FUS6"/>
<dbReference type="Proteomes" id="UP000008816">
    <property type="component" value="Chromosome"/>
</dbReference>
<dbReference type="GO" id="GO:0005829">
    <property type="term" value="C:cytosol"/>
    <property type="evidence" value="ECO:0007669"/>
    <property type="project" value="InterPro"/>
</dbReference>
<dbReference type="GO" id="GO:0016920">
    <property type="term" value="F:pyroglutamyl-peptidase activity"/>
    <property type="evidence" value="ECO:0007669"/>
    <property type="project" value="UniProtKB-UniRule"/>
</dbReference>
<dbReference type="GO" id="GO:0006508">
    <property type="term" value="P:proteolysis"/>
    <property type="evidence" value="ECO:0007669"/>
    <property type="project" value="UniProtKB-KW"/>
</dbReference>
<dbReference type="CDD" id="cd00501">
    <property type="entry name" value="Peptidase_C15"/>
    <property type="match status" value="1"/>
</dbReference>
<dbReference type="FunFam" id="3.40.630.20:FF:000001">
    <property type="entry name" value="Pyrrolidone-carboxylate peptidase"/>
    <property type="match status" value="1"/>
</dbReference>
<dbReference type="Gene3D" id="3.40.630.20">
    <property type="entry name" value="Peptidase C15, pyroglutamyl peptidase I-like"/>
    <property type="match status" value="1"/>
</dbReference>
<dbReference type="HAMAP" id="MF_00417">
    <property type="entry name" value="Pyrrolid_peptidase"/>
    <property type="match status" value="1"/>
</dbReference>
<dbReference type="InterPro" id="IPR000816">
    <property type="entry name" value="Peptidase_C15"/>
</dbReference>
<dbReference type="InterPro" id="IPR016125">
    <property type="entry name" value="Peptidase_C15-like"/>
</dbReference>
<dbReference type="InterPro" id="IPR036440">
    <property type="entry name" value="Peptidase_C15-like_sf"/>
</dbReference>
<dbReference type="InterPro" id="IPR029762">
    <property type="entry name" value="PGP-I_bact-type"/>
</dbReference>
<dbReference type="InterPro" id="IPR033694">
    <property type="entry name" value="PGPEP1_Cys_AS"/>
</dbReference>
<dbReference type="InterPro" id="IPR033693">
    <property type="entry name" value="PGPEP1_Glu_AS"/>
</dbReference>
<dbReference type="NCBIfam" id="NF009676">
    <property type="entry name" value="PRK13197.1"/>
    <property type="match status" value="1"/>
</dbReference>
<dbReference type="NCBIfam" id="TIGR00504">
    <property type="entry name" value="pyro_pdase"/>
    <property type="match status" value="1"/>
</dbReference>
<dbReference type="PANTHER" id="PTHR23402">
    <property type="entry name" value="PROTEASE FAMILY C15 PYROGLUTAMYL-PEPTIDASE I-RELATED"/>
    <property type="match status" value="1"/>
</dbReference>
<dbReference type="PANTHER" id="PTHR23402:SF1">
    <property type="entry name" value="PYROGLUTAMYL-PEPTIDASE I"/>
    <property type="match status" value="1"/>
</dbReference>
<dbReference type="Pfam" id="PF01470">
    <property type="entry name" value="Peptidase_C15"/>
    <property type="match status" value="1"/>
</dbReference>
<dbReference type="PIRSF" id="PIRSF015592">
    <property type="entry name" value="Prld-crbxl_pptds"/>
    <property type="match status" value="1"/>
</dbReference>
<dbReference type="PRINTS" id="PR00706">
    <property type="entry name" value="PYROGLUPTASE"/>
</dbReference>
<dbReference type="SUPFAM" id="SSF53182">
    <property type="entry name" value="Pyrrolidone carboxyl peptidase (pyroglutamate aminopeptidase)"/>
    <property type="match status" value="1"/>
</dbReference>
<dbReference type="PROSITE" id="PS01334">
    <property type="entry name" value="PYRASE_CYS"/>
    <property type="match status" value="1"/>
</dbReference>
<dbReference type="PROSITE" id="PS01333">
    <property type="entry name" value="PYRASE_GLU"/>
    <property type="match status" value="1"/>
</dbReference>
<feature type="chain" id="PRO_1000050139" description="Pyrrolidone-carboxylate peptidase">
    <location>
        <begin position="1"/>
        <end position="212"/>
    </location>
</feature>
<feature type="active site" evidence="1">
    <location>
        <position position="78"/>
    </location>
</feature>
<feature type="active site" evidence="1">
    <location>
        <position position="141"/>
    </location>
</feature>
<feature type="active site" evidence="1">
    <location>
        <position position="165"/>
    </location>
</feature>
<keyword id="KW-0963">Cytoplasm</keyword>
<keyword id="KW-0378">Hydrolase</keyword>
<keyword id="KW-0645">Protease</keyword>
<keyword id="KW-1185">Reference proteome</keyword>
<keyword id="KW-0788">Thiol protease</keyword>
<protein>
    <recommendedName>
        <fullName evidence="1">Pyrrolidone-carboxylate peptidase</fullName>
        <ecNumber evidence="1">3.4.19.3</ecNumber>
    </recommendedName>
    <alternativeName>
        <fullName evidence="1">5-oxoprolyl-peptidase</fullName>
    </alternativeName>
    <alternativeName>
        <fullName evidence="1">Pyroglutamyl-peptidase I</fullName>
        <shortName evidence="1">PGP-I</shortName>
        <shortName evidence="1">Pyrase</shortName>
    </alternativeName>
</protein>
<proteinExistence type="inferred from homology"/>
<sequence>MHILVTGFAPFDNQNINPSWEAVTQLEDIIGTHTIDKLKLPTSFKKVDNIINKTLASNHYDVVLAIGQAGGRNAITPERVAINIDDARIPDNDDFQPIDQAIHLDGAPAYFSNLPVKAMTQSIINQGLPGALSNSAGTFVCNHTLYHLGYLQDKHYPHLRFGFIHVPYIPEQVIGKPDTPSMPLEKIVAGLTAAIEAISNDEDLHLALGTTE</sequence>
<organism>
    <name type="scientific">Staphylococcus aureus (strain NCTC 8325 / PS 47)</name>
    <dbReference type="NCBI Taxonomy" id="93061"/>
    <lineage>
        <taxon>Bacteria</taxon>
        <taxon>Bacillati</taxon>
        <taxon>Bacillota</taxon>
        <taxon>Bacilli</taxon>
        <taxon>Bacillales</taxon>
        <taxon>Staphylococcaceae</taxon>
        <taxon>Staphylococcus</taxon>
    </lineage>
</organism>
<reference key="1">
    <citation type="book" date="2006" name="Gram positive pathogens, 2nd edition">
        <title>The Staphylococcus aureus NCTC 8325 genome.</title>
        <editorList>
            <person name="Fischetti V."/>
            <person name="Novick R."/>
            <person name="Ferretti J."/>
            <person name="Portnoy D."/>
            <person name="Rood J."/>
        </editorList>
        <authorList>
            <person name="Gillaspy A.F."/>
            <person name="Worrell V."/>
            <person name="Orvis J."/>
            <person name="Roe B.A."/>
            <person name="Dyer D.W."/>
            <person name="Iandolo J.J."/>
        </authorList>
    </citation>
    <scope>NUCLEOTIDE SEQUENCE [LARGE SCALE GENOMIC DNA]</scope>
    <source>
        <strain>NCTC 8325 / PS 47</strain>
    </source>
</reference>
<name>PCP_STAA8</name>
<gene>
    <name evidence="1" type="primary">pcp</name>
    <name type="ordered locus">SAOUHSC_03025</name>
</gene>